<name>AMPA_RHILW</name>
<sequence length="496" mass="52325">MSAKFEISFSKSAKLTGGLAILLKTTDADSAAGAETVDPAGVIAKAARIARFSAKSMSALDIVAPEGASVERIVVIGLGKAADLTAHDWLKAGGTAAARIKNTDKTAVFIDVPGRETSARAAADFALGMLLRTYSFDTYKTKKNDDEEKAGKSVKVTIVTTDPAGAKKAFSDSEAIAGGVNLARDLVNEPPNVLGPVEFAAKAKELEKLGIEVEILTEKEMRRFGMGALLGVAQGSVRPPRLAVMQWKGGKAKDRPVAFIGKGVVFDTGGISIKPAAGMEDMKGDMGGAAAVTGLMHVLASRKAAVNAVGIIGLVENMPDGNAQRPGDIVTSMSGQTIEVINTDAEGRLVLCDALWYCNDRFKPQFMINLATLTGAIVVALGNVHAGLFSNDDQLSAQLTEAGLSTNEKLWRMPLGKDYDKLIDSKFADMKNTGGRQAGSITAAHFIKRFVQDTPWAHLDIAGTAMGSPQDEINQSWGSGFGVRLLDELVRAHYES</sequence>
<keyword id="KW-0031">Aminopeptidase</keyword>
<keyword id="KW-0963">Cytoplasm</keyword>
<keyword id="KW-0378">Hydrolase</keyword>
<keyword id="KW-0464">Manganese</keyword>
<keyword id="KW-0479">Metal-binding</keyword>
<keyword id="KW-0645">Protease</keyword>
<keyword id="KW-1185">Reference proteome</keyword>
<feature type="chain" id="PRO_1000098340" description="Probable cytosol aminopeptidase">
    <location>
        <begin position="1"/>
        <end position="496"/>
    </location>
</feature>
<feature type="active site" evidence="1">
    <location>
        <position position="274"/>
    </location>
</feature>
<feature type="active site" evidence="1">
    <location>
        <position position="348"/>
    </location>
</feature>
<feature type="binding site" evidence="1">
    <location>
        <position position="262"/>
    </location>
    <ligand>
        <name>Mn(2+)</name>
        <dbReference type="ChEBI" id="CHEBI:29035"/>
        <label>2</label>
    </ligand>
</feature>
<feature type="binding site" evidence="1">
    <location>
        <position position="267"/>
    </location>
    <ligand>
        <name>Mn(2+)</name>
        <dbReference type="ChEBI" id="CHEBI:29035"/>
        <label>1</label>
    </ligand>
</feature>
<feature type="binding site" evidence="1">
    <location>
        <position position="267"/>
    </location>
    <ligand>
        <name>Mn(2+)</name>
        <dbReference type="ChEBI" id="CHEBI:29035"/>
        <label>2</label>
    </ligand>
</feature>
<feature type="binding site" evidence="1">
    <location>
        <position position="285"/>
    </location>
    <ligand>
        <name>Mn(2+)</name>
        <dbReference type="ChEBI" id="CHEBI:29035"/>
        <label>2</label>
    </ligand>
</feature>
<feature type="binding site" evidence="1">
    <location>
        <position position="344"/>
    </location>
    <ligand>
        <name>Mn(2+)</name>
        <dbReference type="ChEBI" id="CHEBI:29035"/>
        <label>1</label>
    </ligand>
</feature>
<feature type="binding site" evidence="1">
    <location>
        <position position="346"/>
    </location>
    <ligand>
        <name>Mn(2+)</name>
        <dbReference type="ChEBI" id="CHEBI:29035"/>
        <label>1</label>
    </ligand>
</feature>
<feature type="binding site" evidence="1">
    <location>
        <position position="346"/>
    </location>
    <ligand>
        <name>Mn(2+)</name>
        <dbReference type="ChEBI" id="CHEBI:29035"/>
        <label>2</label>
    </ligand>
</feature>
<reference key="1">
    <citation type="journal article" date="2010" name="Stand. Genomic Sci.">
        <title>Complete genome sequence of Rhizobium leguminosarum bv trifolii strain WSM2304, an effective microsymbiont of the South American clover Trifolium polymorphum.</title>
        <authorList>
            <person name="Reeve W."/>
            <person name="O'Hara G."/>
            <person name="Chain P."/>
            <person name="Ardley J."/>
            <person name="Brau L."/>
            <person name="Nandesena K."/>
            <person name="Tiwari R."/>
            <person name="Malfatti S."/>
            <person name="Kiss H."/>
            <person name="Lapidus A."/>
            <person name="Copeland A."/>
            <person name="Nolan M."/>
            <person name="Land M."/>
            <person name="Ivanova N."/>
            <person name="Mavromatis K."/>
            <person name="Markowitz V."/>
            <person name="Kyrpides N."/>
            <person name="Melino V."/>
            <person name="Denton M."/>
            <person name="Yates R."/>
            <person name="Howieson J."/>
        </authorList>
    </citation>
    <scope>NUCLEOTIDE SEQUENCE [LARGE SCALE GENOMIC DNA]</scope>
    <source>
        <strain>WSM2304</strain>
    </source>
</reference>
<protein>
    <recommendedName>
        <fullName evidence="1">Probable cytosol aminopeptidase</fullName>
        <ecNumber evidence="1">3.4.11.1</ecNumber>
    </recommendedName>
    <alternativeName>
        <fullName evidence="1">Leucine aminopeptidase</fullName>
        <shortName evidence="1">LAP</shortName>
        <ecNumber evidence="1">3.4.11.10</ecNumber>
    </alternativeName>
    <alternativeName>
        <fullName evidence="1">Leucyl aminopeptidase</fullName>
    </alternativeName>
</protein>
<dbReference type="EC" id="3.4.11.1" evidence="1"/>
<dbReference type="EC" id="3.4.11.10" evidence="1"/>
<dbReference type="EMBL" id="CP001191">
    <property type="protein sequence ID" value="ACI54364.1"/>
    <property type="molecule type" value="Genomic_DNA"/>
</dbReference>
<dbReference type="RefSeq" id="WP_012557175.1">
    <property type="nucleotide sequence ID" value="NC_011369.1"/>
</dbReference>
<dbReference type="SMR" id="B5ZWY7"/>
<dbReference type="STRING" id="395492.Rleg2_1070"/>
<dbReference type="KEGG" id="rlt:Rleg2_1070"/>
<dbReference type="eggNOG" id="COG0260">
    <property type="taxonomic scope" value="Bacteria"/>
</dbReference>
<dbReference type="HOGENOM" id="CLU_013734_6_0_5"/>
<dbReference type="Proteomes" id="UP000008330">
    <property type="component" value="Chromosome"/>
</dbReference>
<dbReference type="GO" id="GO:0005737">
    <property type="term" value="C:cytoplasm"/>
    <property type="evidence" value="ECO:0007669"/>
    <property type="project" value="UniProtKB-SubCell"/>
</dbReference>
<dbReference type="GO" id="GO:0030145">
    <property type="term" value="F:manganese ion binding"/>
    <property type="evidence" value="ECO:0007669"/>
    <property type="project" value="UniProtKB-UniRule"/>
</dbReference>
<dbReference type="GO" id="GO:0070006">
    <property type="term" value="F:metalloaminopeptidase activity"/>
    <property type="evidence" value="ECO:0007669"/>
    <property type="project" value="InterPro"/>
</dbReference>
<dbReference type="GO" id="GO:0006508">
    <property type="term" value="P:proteolysis"/>
    <property type="evidence" value="ECO:0007669"/>
    <property type="project" value="UniProtKB-KW"/>
</dbReference>
<dbReference type="CDD" id="cd00433">
    <property type="entry name" value="Peptidase_M17"/>
    <property type="match status" value="1"/>
</dbReference>
<dbReference type="Gene3D" id="3.40.220.10">
    <property type="entry name" value="Leucine Aminopeptidase, subunit E, domain 1"/>
    <property type="match status" value="1"/>
</dbReference>
<dbReference type="Gene3D" id="3.40.630.10">
    <property type="entry name" value="Zn peptidases"/>
    <property type="match status" value="1"/>
</dbReference>
<dbReference type="HAMAP" id="MF_00181">
    <property type="entry name" value="Cytosol_peptidase_M17"/>
    <property type="match status" value="1"/>
</dbReference>
<dbReference type="InterPro" id="IPR011356">
    <property type="entry name" value="Leucine_aapep/pepB"/>
</dbReference>
<dbReference type="InterPro" id="IPR043472">
    <property type="entry name" value="Macro_dom-like"/>
</dbReference>
<dbReference type="InterPro" id="IPR000819">
    <property type="entry name" value="Peptidase_M17_C"/>
</dbReference>
<dbReference type="InterPro" id="IPR023042">
    <property type="entry name" value="Peptidase_M17_leu_NH2_pept"/>
</dbReference>
<dbReference type="InterPro" id="IPR008283">
    <property type="entry name" value="Peptidase_M17_N"/>
</dbReference>
<dbReference type="NCBIfam" id="NF002073">
    <property type="entry name" value="PRK00913.1-2"/>
    <property type="match status" value="1"/>
</dbReference>
<dbReference type="NCBIfam" id="NF002074">
    <property type="entry name" value="PRK00913.1-4"/>
    <property type="match status" value="1"/>
</dbReference>
<dbReference type="NCBIfam" id="NF002075">
    <property type="entry name" value="PRK00913.2-2"/>
    <property type="match status" value="1"/>
</dbReference>
<dbReference type="NCBIfam" id="NF002077">
    <property type="entry name" value="PRK00913.2-4"/>
    <property type="match status" value="1"/>
</dbReference>
<dbReference type="NCBIfam" id="NF002083">
    <property type="entry name" value="PRK00913.3-5"/>
    <property type="match status" value="1"/>
</dbReference>
<dbReference type="PANTHER" id="PTHR11963:SF23">
    <property type="entry name" value="CYTOSOL AMINOPEPTIDASE"/>
    <property type="match status" value="1"/>
</dbReference>
<dbReference type="PANTHER" id="PTHR11963">
    <property type="entry name" value="LEUCINE AMINOPEPTIDASE-RELATED"/>
    <property type="match status" value="1"/>
</dbReference>
<dbReference type="Pfam" id="PF00883">
    <property type="entry name" value="Peptidase_M17"/>
    <property type="match status" value="1"/>
</dbReference>
<dbReference type="Pfam" id="PF02789">
    <property type="entry name" value="Peptidase_M17_N"/>
    <property type="match status" value="1"/>
</dbReference>
<dbReference type="PRINTS" id="PR00481">
    <property type="entry name" value="LAMNOPPTDASE"/>
</dbReference>
<dbReference type="SUPFAM" id="SSF52949">
    <property type="entry name" value="Macro domain-like"/>
    <property type="match status" value="1"/>
</dbReference>
<dbReference type="SUPFAM" id="SSF53187">
    <property type="entry name" value="Zn-dependent exopeptidases"/>
    <property type="match status" value="1"/>
</dbReference>
<dbReference type="PROSITE" id="PS00631">
    <property type="entry name" value="CYTOSOL_AP"/>
    <property type="match status" value="1"/>
</dbReference>
<gene>
    <name evidence="1" type="primary">pepA</name>
    <name type="ordered locus">Rleg2_1070</name>
</gene>
<proteinExistence type="inferred from homology"/>
<evidence type="ECO:0000255" key="1">
    <source>
        <dbReference type="HAMAP-Rule" id="MF_00181"/>
    </source>
</evidence>
<accession>B5ZWY7</accession>
<organism>
    <name type="scientific">Rhizobium leguminosarum bv. trifolii (strain WSM2304)</name>
    <dbReference type="NCBI Taxonomy" id="395492"/>
    <lineage>
        <taxon>Bacteria</taxon>
        <taxon>Pseudomonadati</taxon>
        <taxon>Pseudomonadota</taxon>
        <taxon>Alphaproteobacteria</taxon>
        <taxon>Hyphomicrobiales</taxon>
        <taxon>Rhizobiaceae</taxon>
        <taxon>Rhizobium/Agrobacterium group</taxon>
        <taxon>Rhizobium</taxon>
    </lineage>
</organism>
<comment type="function">
    <text evidence="1">Presumably involved in the processing and regular turnover of intracellular proteins. Catalyzes the removal of unsubstituted N-terminal amino acids from various peptides.</text>
</comment>
<comment type="catalytic activity">
    <reaction evidence="1">
        <text>Release of an N-terminal amino acid, Xaa-|-Yaa-, in which Xaa is preferably Leu, but may be other amino acids including Pro although not Arg or Lys, and Yaa may be Pro. Amino acid amides and methyl esters are also readily hydrolyzed, but rates on arylamides are exceedingly low.</text>
        <dbReference type="EC" id="3.4.11.1"/>
    </reaction>
</comment>
<comment type="catalytic activity">
    <reaction evidence="1">
        <text>Release of an N-terminal amino acid, preferentially leucine, but not glutamic or aspartic acids.</text>
        <dbReference type="EC" id="3.4.11.10"/>
    </reaction>
</comment>
<comment type="cofactor">
    <cofactor evidence="1">
        <name>Mn(2+)</name>
        <dbReference type="ChEBI" id="CHEBI:29035"/>
    </cofactor>
    <text evidence="1">Binds 2 manganese ions per subunit.</text>
</comment>
<comment type="subcellular location">
    <subcellularLocation>
        <location evidence="1">Cytoplasm</location>
    </subcellularLocation>
</comment>
<comment type="similarity">
    <text evidence="1">Belongs to the peptidase M17 family.</text>
</comment>